<name>HIS7_PICST</name>
<accession>Q9C1D4</accession>
<reference key="1">
    <citation type="submission" date="2001-02" db="EMBL/GenBank/DDBJ databases">
        <title>Pichia stipitis HIS3 gene.</title>
        <authorList>
            <person name="Schruff B.S."/>
            <person name="Klinner U."/>
        </authorList>
    </citation>
    <scope>NUCLEOTIDE SEQUENCE [GENOMIC DNA]</scope>
    <source>
        <strain>ATCC 62970 / CBS 5774 / NRRL Y-11542</strain>
    </source>
</reference>
<reference key="2">
    <citation type="journal article" date="2007" name="Nat. Biotechnol.">
        <title>Genome sequence of the lignocellulose-bioconverting and xylose-fermenting yeast Pichia stipitis.</title>
        <authorList>
            <person name="Jeffries T.W."/>
            <person name="Grigoriev I.V."/>
            <person name="Grimwood J."/>
            <person name="Laplaza J.M."/>
            <person name="Aerts A."/>
            <person name="Salamov A."/>
            <person name="Schmutz J."/>
            <person name="Lindquist E."/>
            <person name="Dehal P."/>
            <person name="Shapiro H."/>
            <person name="Jin Y.-S."/>
            <person name="Passoth V."/>
            <person name="Richardson P.M."/>
        </authorList>
    </citation>
    <scope>NUCLEOTIDE SEQUENCE [LARGE SCALE GENOMIC DNA]</scope>
    <source>
        <strain>ATCC 58785 / CBS 6054 / NBRC 10063 / NRRL Y-11545</strain>
    </source>
</reference>
<proteinExistence type="inferred from homology"/>
<keyword id="KW-0028">Amino-acid biosynthesis</keyword>
<keyword id="KW-0368">Histidine biosynthesis</keyword>
<keyword id="KW-0456">Lyase</keyword>
<keyword id="KW-1185">Reference proteome</keyword>
<dbReference type="EC" id="4.2.1.19"/>
<dbReference type="EMBL" id="AF348970">
    <property type="protein sequence ID" value="AAK27156.1"/>
    <property type="molecule type" value="Genomic_DNA"/>
</dbReference>
<dbReference type="EMBL" id="CP000498">
    <property type="status" value="NOT_ANNOTATED_CDS"/>
    <property type="molecule type" value="Genomic_DNA"/>
</dbReference>
<dbReference type="SMR" id="Q9C1D4"/>
<dbReference type="FunCoup" id="Q9C1D4">
    <property type="interactions" value="257"/>
</dbReference>
<dbReference type="STRING" id="322104.Q9C1D4"/>
<dbReference type="InParanoid" id="Q9C1D4"/>
<dbReference type="UniPathway" id="UPA00031">
    <property type="reaction ID" value="UER00011"/>
</dbReference>
<dbReference type="Proteomes" id="UP000002258">
    <property type="component" value="Chromosome 4"/>
</dbReference>
<dbReference type="GO" id="GO:0004424">
    <property type="term" value="F:imidazoleglycerol-phosphate dehydratase activity"/>
    <property type="evidence" value="ECO:0007669"/>
    <property type="project" value="UniProtKB-EC"/>
</dbReference>
<dbReference type="GO" id="GO:0000105">
    <property type="term" value="P:L-histidine biosynthetic process"/>
    <property type="evidence" value="ECO:0007669"/>
    <property type="project" value="UniProtKB-UniPathway"/>
</dbReference>
<dbReference type="CDD" id="cd07914">
    <property type="entry name" value="IGPD"/>
    <property type="match status" value="1"/>
</dbReference>
<dbReference type="FunFam" id="3.30.230.40:FF:000005">
    <property type="entry name" value="Imidazoleglycerol-phosphate dehydratase"/>
    <property type="match status" value="1"/>
</dbReference>
<dbReference type="FunFam" id="3.30.230.40:FF:000001">
    <property type="entry name" value="Imidazoleglycerol-phosphate dehydratase HisB"/>
    <property type="match status" value="1"/>
</dbReference>
<dbReference type="Gene3D" id="3.30.230.40">
    <property type="entry name" value="Imidazole glycerol phosphate dehydratase, domain 1"/>
    <property type="match status" value="2"/>
</dbReference>
<dbReference type="HAMAP" id="MF_00076">
    <property type="entry name" value="HisB"/>
    <property type="match status" value="1"/>
</dbReference>
<dbReference type="InterPro" id="IPR038494">
    <property type="entry name" value="IGPD_sf"/>
</dbReference>
<dbReference type="InterPro" id="IPR000807">
    <property type="entry name" value="ImidazoleglycerolP_deHydtase"/>
</dbReference>
<dbReference type="InterPro" id="IPR020565">
    <property type="entry name" value="ImidazoleglycerP_deHydtase_CS"/>
</dbReference>
<dbReference type="InterPro" id="IPR020568">
    <property type="entry name" value="Ribosomal_Su5_D2-typ_SF"/>
</dbReference>
<dbReference type="NCBIfam" id="NF002114">
    <property type="entry name" value="PRK00951.2-4"/>
    <property type="match status" value="1"/>
</dbReference>
<dbReference type="PANTHER" id="PTHR23133:SF2">
    <property type="entry name" value="IMIDAZOLEGLYCEROL-PHOSPHATE DEHYDRATASE"/>
    <property type="match status" value="1"/>
</dbReference>
<dbReference type="PANTHER" id="PTHR23133">
    <property type="entry name" value="IMIDAZOLEGLYCEROL-PHOSPHATE DEHYDRATASE HIS7"/>
    <property type="match status" value="1"/>
</dbReference>
<dbReference type="Pfam" id="PF00475">
    <property type="entry name" value="IGPD"/>
    <property type="match status" value="1"/>
</dbReference>
<dbReference type="SUPFAM" id="SSF54211">
    <property type="entry name" value="Ribosomal protein S5 domain 2-like"/>
    <property type="match status" value="2"/>
</dbReference>
<dbReference type="PROSITE" id="PS00954">
    <property type="entry name" value="IGP_DEHYDRATASE_1"/>
    <property type="match status" value="1"/>
</dbReference>
<dbReference type="PROSITE" id="PS00955">
    <property type="entry name" value="IGP_DEHYDRATASE_2"/>
    <property type="match status" value="1"/>
</dbReference>
<gene>
    <name type="primary">HIS3</name>
</gene>
<sequence>MARTATIKRDTNETKIQIALSLDGGFLAVEESIFKKRKIDDDDEHAKQATSSQVINVQSGIGFLDHMLHALAKHAGWSLIVECIGDLHIDDHHTAEDVGITLGIAFKQALGQVKGVKRFGSGFAPLDEALSRAVVDLSNRPFAVVELGLKREKIGDLSCEMIPHVLESFAQGAHITMHVDCLRGFNDHHRAESAFKALAVAIREAISSNGTNDVPSTKGVLF</sequence>
<feature type="chain" id="PRO_0000158245" description="Imidazoleglycerol-phosphate dehydratase">
    <location>
        <begin position="1"/>
        <end position="222"/>
    </location>
</feature>
<feature type="sequence conflict" description="In Ref. 1; AAK27156." evidence="1" ref="1">
    <original>M</original>
    <variation>T</variation>
    <location>
        <position position="177"/>
    </location>
</feature>
<evidence type="ECO:0000305" key="1"/>
<organism>
    <name type="scientific">Scheffersomyces stipitis (strain ATCC 58785 / CBS 6054 / NBRC 10063 / NRRL Y-11545)</name>
    <name type="common">Yeast</name>
    <name type="synonym">Pichia stipitis</name>
    <dbReference type="NCBI Taxonomy" id="322104"/>
    <lineage>
        <taxon>Eukaryota</taxon>
        <taxon>Fungi</taxon>
        <taxon>Dikarya</taxon>
        <taxon>Ascomycota</taxon>
        <taxon>Saccharomycotina</taxon>
        <taxon>Pichiomycetes</taxon>
        <taxon>Debaryomycetaceae</taxon>
        <taxon>Scheffersomyces</taxon>
    </lineage>
</organism>
<comment type="catalytic activity">
    <reaction>
        <text>D-erythro-1-(imidazol-4-yl)glycerol 3-phosphate = 3-(imidazol-4-yl)-2-oxopropyl phosphate + H2O</text>
        <dbReference type="Rhea" id="RHEA:11040"/>
        <dbReference type="ChEBI" id="CHEBI:15377"/>
        <dbReference type="ChEBI" id="CHEBI:57766"/>
        <dbReference type="ChEBI" id="CHEBI:58278"/>
        <dbReference type="EC" id="4.2.1.19"/>
    </reaction>
</comment>
<comment type="pathway">
    <text>Amino-acid biosynthesis; L-histidine biosynthesis; L-histidine from 5-phospho-alpha-D-ribose 1-diphosphate: step 6/9.</text>
</comment>
<comment type="similarity">
    <text evidence="1">Belongs to the imidazoleglycerol-phosphate dehydratase family.</text>
</comment>
<protein>
    <recommendedName>
        <fullName>Imidazoleglycerol-phosphate dehydratase</fullName>
        <shortName>IGPD</shortName>
        <ecNumber>4.2.1.19</ecNumber>
    </recommendedName>
</protein>